<dbReference type="EMBL" id="X04465">
    <property type="protein sequence ID" value="CAA28119.1"/>
    <property type="molecule type" value="Genomic_DNA"/>
</dbReference>
<dbReference type="PIR" id="A05060">
    <property type="entry name" value="R5LV36"/>
</dbReference>
<dbReference type="RefSeq" id="NP_039333.1">
    <property type="nucleotide sequence ID" value="NC_001319.1"/>
</dbReference>
<dbReference type="RefSeq" id="YP_009646846.1">
    <property type="nucleotide sequence ID" value="NC_042505.1"/>
</dbReference>
<dbReference type="SMR" id="P12142"/>
<dbReference type="GeneID" id="2702566"/>
<dbReference type="GeneID" id="40386720"/>
<dbReference type="GO" id="GO:0009507">
    <property type="term" value="C:chloroplast"/>
    <property type="evidence" value="ECO:0007669"/>
    <property type="project" value="UniProtKB-SubCell"/>
</dbReference>
<dbReference type="GO" id="GO:1990904">
    <property type="term" value="C:ribonucleoprotein complex"/>
    <property type="evidence" value="ECO:0007669"/>
    <property type="project" value="UniProtKB-KW"/>
</dbReference>
<dbReference type="GO" id="GO:0005840">
    <property type="term" value="C:ribosome"/>
    <property type="evidence" value="ECO:0007669"/>
    <property type="project" value="UniProtKB-KW"/>
</dbReference>
<dbReference type="GO" id="GO:0003735">
    <property type="term" value="F:structural constituent of ribosome"/>
    <property type="evidence" value="ECO:0007669"/>
    <property type="project" value="InterPro"/>
</dbReference>
<dbReference type="GO" id="GO:0006412">
    <property type="term" value="P:translation"/>
    <property type="evidence" value="ECO:0007669"/>
    <property type="project" value="UniProtKB-UniRule"/>
</dbReference>
<dbReference type="HAMAP" id="MF_00251">
    <property type="entry name" value="Ribosomal_bL36"/>
    <property type="match status" value="1"/>
</dbReference>
<dbReference type="InterPro" id="IPR000473">
    <property type="entry name" value="Ribosomal_bL36"/>
</dbReference>
<dbReference type="InterPro" id="IPR035977">
    <property type="entry name" value="Ribosomal_bL36_sp"/>
</dbReference>
<dbReference type="NCBIfam" id="TIGR01022">
    <property type="entry name" value="rpmJ_bact"/>
    <property type="match status" value="1"/>
</dbReference>
<dbReference type="PANTHER" id="PTHR42888">
    <property type="entry name" value="50S RIBOSOMAL PROTEIN L36, CHLOROPLASTIC"/>
    <property type="match status" value="1"/>
</dbReference>
<dbReference type="PANTHER" id="PTHR42888:SF1">
    <property type="entry name" value="LARGE RIBOSOMAL SUBUNIT PROTEIN BL36C"/>
    <property type="match status" value="1"/>
</dbReference>
<dbReference type="Pfam" id="PF00444">
    <property type="entry name" value="Ribosomal_L36"/>
    <property type="match status" value="1"/>
</dbReference>
<dbReference type="SUPFAM" id="SSF57840">
    <property type="entry name" value="Ribosomal protein L36"/>
    <property type="match status" value="1"/>
</dbReference>
<dbReference type="PROSITE" id="PS00828">
    <property type="entry name" value="RIBOSOMAL_L36"/>
    <property type="match status" value="1"/>
</dbReference>
<proteinExistence type="inferred from homology"/>
<feature type="chain" id="PRO_0000126326" description="Large ribosomal subunit protein bL36c">
    <location>
        <begin position="1"/>
        <end position="37"/>
    </location>
</feature>
<sequence>MKIRASVRKICENCRLIRRRRRIMVVCSNPKHKQRQG</sequence>
<evidence type="ECO:0000305" key="1"/>
<keyword id="KW-0150">Chloroplast</keyword>
<keyword id="KW-0934">Plastid</keyword>
<keyword id="KW-0687">Ribonucleoprotein</keyword>
<keyword id="KW-0689">Ribosomal protein</keyword>
<geneLocation type="chloroplast"/>
<protein>
    <recommendedName>
        <fullName evidence="1">Large ribosomal subunit protein bL36c</fullName>
    </recommendedName>
    <alternativeName>
        <fullName>50S ribosomal protein L36, chloroplastic</fullName>
    </alternativeName>
</protein>
<name>RK36_MARPO</name>
<reference key="1">
    <citation type="journal article" date="1988" name="J. Mol. Biol.">
        <title>Structure and organization of Marchantia polymorpha chloroplast genome. III. Gene organization of the large single copy region from rbcL to trnI(CAU).</title>
        <authorList>
            <person name="Fukuzawa H."/>
            <person name="Kohchi T."/>
            <person name="Sano T."/>
            <person name="Shirai H."/>
            <person name="Umesono K."/>
            <person name="Inokuchi H."/>
            <person name="Ozeki H."/>
            <person name="Ohyama K."/>
        </authorList>
    </citation>
    <scope>NUCLEOTIDE SEQUENCE [GENOMIC DNA]</scope>
</reference>
<reference key="2">
    <citation type="journal article" date="1986" name="Nature">
        <title>Chloroplast gene organization deduced from complete sequence of liverwort Marchantia polymorpha chloroplast DNA.</title>
        <authorList>
            <person name="Ohyama K."/>
            <person name="Fukuzawa H."/>
            <person name="Kohchi T."/>
            <person name="Shirai H."/>
            <person name="Sano T."/>
            <person name="Sano S."/>
            <person name="Umesono K."/>
            <person name="Shiki Y."/>
            <person name="Takeuchi M."/>
            <person name="Chang Z."/>
            <person name="Aota S."/>
            <person name="Inokuchi H."/>
            <person name="Ozeki H."/>
        </authorList>
    </citation>
    <scope>NUCLEOTIDE SEQUENCE [LARGE SCALE GENOMIC DNA]</scope>
</reference>
<gene>
    <name type="primary">rpl36</name>
    <name type="synonym">secX</name>
</gene>
<comment type="subcellular location">
    <subcellularLocation>
        <location>Plastid</location>
        <location>Chloroplast</location>
    </subcellularLocation>
</comment>
<comment type="similarity">
    <text evidence="1">Belongs to the bacterial ribosomal protein bL36 family.</text>
</comment>
<accession>P12142</accession>
<organism>
    <name type="scientific">Marchantia polymorpha</name>
    <name type="common">Common liverwort</name>
    <name type="synonym">Marchantia aquatica</name>
    <dbReference type="NCBI Taxonomy" id="3197"/>
    <lineage>
        <taxon>Eukaryota</taxon>
        <taxon>Viridiplantae</taxon>
        <taxon>Streptophyta</taxon>
        <taxon>Embryophyta</taxon>
        <taxon>Marchantiophyta</taxon>
        <taxon>Marchantiopsida</taxon>
        <taxon>Marchantiidae</taxon>
        <taxon>Marchantiales</taxon>
        <taxon>Marchantiaceae</taxon>
        <taxon>Marchantia</taxon>
    </lineage>
</organism>